<proteinExistence type="inferred from homology"/>
<dbReference type="EC" id="2.3.1.1" evidence="1"/>
<dbReference type="EMBL" id="AE016827">
    <property type="protein sequence ID" value="AAU37361.1"/>
    <property type="molecule type" value="Genomic_DNA"/>
</dbReference>
<dbReference type="RefSeq" id="WP_011199933.1">
    <property type="nucleotide sequence ID" value="NC_006300.1"/>
</dbReference>
<dbReference type="SMR" id="Q65UJ9"/>
<dbReference type="STRING" id="221988.MS0754"/>
<dbReference type="KEGG" id="msu:MS0754"/>
<dbReference type="eggNOG" id="COG0548">
    <property type="taxonomic scope" value="Bacteria"/>
</dbReference>
<dbReference type="eggNOG" id="COG1246">
    <property type="taxonomic scope" value="Bacteria"/>
</dbReference>
<dbReference type="HOGENOM" id="CLU_024773_0_0_6"/>
<dbReference type="OrthoDB" id="9802238at2"/>
<dbReference type="UniPathway" id="UPA00068">
    <property type="reaction ID" value="UER00106"/>
</dbReference>
<dbReference type="Proteomes" id="UP000000607">
    <property type="component" value="Chromosome"/>
</dbReference>
<dbReference type="GO" id="GO:0005737">
    <property type="term" value="C:cytoplasm"/>
    <property type="evidence" value="ECO:0007669"/>
    <property type="project" value="UniProtKB-SubCell"/>
</dbReference>
<dbReference type="GO" id="GO:0004042">
    <property type="term" value="F:L-glutamate N-acetyltransferase activity"/>
    <property type="evidence" value="ECO:0007669"/>
    <property type="project" value="UniProtKB-UniRule"/>
</dbReference>
<dbReference type="GO" id="GO:0006526">
    <property type="term" value="P:L-arginine biosynthetic process"/>
    <property type="evidence" value="ECO:0007669"/>
    <property type="project" value="UniProtKB-UniRule"/>
</dbReference>
<dbReference type="CDD" id="cd04237">
    <property type="entry name" value="AAK_NAGS-ABP"/>
    <property type="match status" value="1"/>
</dbReference>
<dbReference type="CDD" id="cd04301">
    <property type="entry name" value="NAT_SF"/>
    <property type="match status" value="1"/>
</dbReference>
<dbReference type="Gene3D" id="3.40.630.30">
    <property type="match status" value="1"/>
</dbReference>
<dbReference type="Gene3D" id="3.40.1160.10">
    <property type="entry name" value="Acetylglutamate kinase-like"/>
    <property type="match status" value="1"/>
</dbReference>
<dbReference type="HAMAP" id="MF_01105">
    <property type="entry name" value="N_acetyl_glu_synth"/>
    <property type="match status" value="1"/>
</dbReference>
<dbReference type="InterPro" id="IPR036393">
    <property type="entry name" value="AceGlu_kinase-like_sf"/>
</dbReference>
<dbReference type="InterPro" id="IPR016181">
    <property type="entry name" value="Acyl_CoA_acyltransferase"/>
</dbReference>
<dbReference type="InterPro" id="IPR001048">
    <property type="entry name" value="Asp/Glu/Uridylate_kinase"/>
</dbReference>
<dbReference type="InterPro" id="IPR000182">
    <property type="entry name" value="GNAT_dom"/>
</dbReference>
<dbReference type="InterPro" id="IPR033719">
    <property type="entry name" value="NAGS_kin"/>
</dbReference>
<dbReference type="InterPro" id="IPR010167">
    <property type="entry name" value="NH2A_AcTrfase"/>
</dbReference>
<dbReference type="NCBIfam" id="TIGR01890">
    <property type="entry name" value="N-Ac-Glu-synth"/>
    <property type="match status" value="1"/>
</dbReference>
<dbReference type="NCBIfam" id="NF003641">
    <property type="entry name" value="PRK05279.1"/>
    <property type="match status" value="1"/>
</dbReference>
<dbReference type="PANTHER" id="PTHR30602">
    <property type="entry name" value="AMINO-ACID ACETYLTRANSFERASE"/>
    <property type="match status" value="1"/>
</dbReference>
<dbReference type="PANTHER" id="PTHR30602:SF12">
    <property type="entry name" value="AMINO-ACID ACETYLTRANSFERASE NAGS1, CHLOROPLASTIC-RELATED"/>
    <property type="match status" value="1"/>
</dbReference>
<dbReference type="Pfam" id="PF00696">
    <property type="entry name" value="AA_kinase"/>
    <property type="match status" value="1"/>
</dbReference>
<dbReference type="Pfam" id="PF00583">
    <property type="entry name" value="Acetyltransf_1"/>
    <property type="match status" value="1"/>
</dbReference>
<dbReference type="PIRSF" id="PIRSF000423">
    <property type="entry name" value="ArgA"/>
    <property type="match status" value="1"/>
</dbReference>
<dbReference type="SUPFAM" id="SSF55729">
    <property type="entry name" value="Acyl-CoA N-acyltransferases (Nat)"/>
    <property type="match status" value="1"/>
</dbReference>
<dbReference type="SUPFAM" id="SSF53633">
    <property type="entry name" value="Carbamate kinase-like"/>
    <property type="match status" value="1"/>
</dbReference>
<dbReference type="PROSITE" id="PS51186">
    <property type="entry name" value="GNAT"/>
    <property type="match status" value="1"/>
</dbReference>
<sequence length="439" mass="49472">MRSTELVQWFRQSTPYVNMHRGKTFVIMLDGNTIASSNFINIINDISLLHSLGIKLIIVYGARVQINSLLAQNNVTSVYHKNIRVTDPRTLELVKQAVGQLSYDITARLSVRLPHSPVLNVVSSNFILAQPIGVDDGVDYMLSGKIRRIEIDNIKHHLDNNAIVLLGPIAPSVTGETFNLPFEEIATQVAIKLKAEKLIGFSSTQGILDPQGISIPDLLPQDAAKYLNQYIQQGEYHCSQARFLQAAIEVCKAGVKRSHLLSYEEDGSLLQELFTRDGVGTQLSVDNSEDIRIATVQDIPGLIELIHPLEQQGILVKRSREQLEMDIANYTIIDRDGVIIACAALNQYPEENMAEMACVAVHPDYRSSSRGDILLEAIQKRARQLGIEKLFVLTTRTVHWFQERGFRLANVEDLPKEKRDHYNYQRRSKILIQPLNEEE</sequence>
<feature type="chain" id="PRO_1000084813" description="Amino-acid acetyltransferase">
    <location>
        <begin position="1"/>
        <end position="439"/>
    </location>
</feature>
<feature type="domain" description="N-acetyltransferase" evidence="1">
    <location>
        <begin position="289"/>
        <end position="429"/>
    </location>
</feature>
<accession>Q65UJ9</accession>
<gene>
    <name evidence="1" type="primary">argA</name>
    <name type="ordered locus">MS0754</name>
</gene>
<evidence type="ECO:0000255" key="1">
    <source>
        <dbReference type="HAMAP-Rule" id="MF_01105"/>
    </source>
</evidence>
<organism>
    <name type="scientific">Mannheimia succiniciproducens (strain KCTC 0769BP / MBEL55E)</name>
    <dbReference type="NCBI Taxonomy" id="221988"/>
    <lineage>
        <taxon>Bacteria</taxon>
        <taxon>Pseudomonadati</taxon>
        <taxon>Pseudomonadota</taxon>
        <taxon>Gammaproteobacteria</taxon>
        <taxon>Pasteurellales</taxon>
        <taxon>Pasteurellaceae</taxon>
        <taxon>Basfia</taxon>
    </lineage>
</organism>
<name>ARGA_MANSM</name>
<reference key="1">
    <citation type="journal article" date="2004" name="Nat. Biotechnol.">
        <title>The genome sequence of the capnophilic rumen bacterium Mannheimia succiniciproducens.</title>
        <authorList>
            <person name="Hong S.H."/>
            <person name="Kim J.S."/>
            <person name="Lee S.Y."/>
            <person name="In Y.H."/>
            <person name="Choi S.S."/>
            <person name="Rih J.-K."/>
            <person name="Kim C.H."/>
            <person name="Jeong H."/>
            <person name="Hur C.G."/>
            <person name="Kim J.J."/>
        </authorList>
    </citation>
    <scope>NUCLEOTIDE SEQUENCE [LARGE SCALE GENOMIC DNA]</scope>
    <source>
        <strain>KCTC 0769BP / MBEL55E</strain>
    </source>
</reference>
<keyword id="KW-0012">Acyltransferase</keyword>
<keyword id="KW-0028">Amino-acid biosynthesis</keyword>
<keyword id="KW-0055">Arginine biosynthesis</keyword>
<keyword id="KW-0963">Cytoplasm</keyword>
<keyword id="KW-0808">Transferase</keyword>
<protein>
    <recommendedName>
        <fullName evidence="1">Amino-acid acetyltransferase</fullName>
        <ecNumber evidence="1">2.3.1.1</ecNumber>
    </recommendedName>
    <alternativeName>
        <fullName evidence="1">N-acetylglutamate synthase</fullName>
        <shortName evidence="1">AGS</shortName>
        <shortName evidence="1">NAGS</shortName>
    </alternativeName>
</protein>
<comment type="catalytic activity">
    <reaction evidence="1">
        <text>L-glutamate + acetyl-CoA = N-acetyl-L-glutamate + CoA + H(+)</text>
        <dbReference type="Rhea" id="RHEA:24292"/>
        <dbReference type="ChEBI" id="CHEBI:15378"/>
        <dbReference type="ChEBI" id="CHEBI:29985"/>
        <dbReference type="ChEBI" id="CHEBI:44337"/>
        <dbReference type="ChEBI" id="CHEBI:57287"/>
        <dbReference type="ChEBI" id="CHEBI:57288"/>
        <dbReference type="EC" id="2.3.1.1"/>
    </reaction>
</comment>
<comment type="pathway">
    <text evidence="1">Amino-acid biosynthesis; L-arginine biosynthesis; N(2)-acetyl-L-ornithine from L-glutamate: step 1/4.</text>
</comment>
<comment type="subcellular location">
    <subcellularLocation>
        <location evidence="1">Cytoplasm</location>
    </subcellularLocation>
</comment>
<comment type="miscellaneous">
    <text>In bacteria which possess the bifunctional enzyme ornithine acetyltransferase/N-acetylglutamate synthase (ArgJ), ArgA fulfills an anaplerotic role.</text>
</comment>
<comment type="similarity">
    <text evidence="1">Belongs to the acetyltransferase family. ArgA subfamily.</text>
</comment>